<comment type="miscellaneous">
    <text evidence="1">On the 2D-gel the determined pI of this unknown protein is: 6.7, its MW is: 30.0 kDa.</text>
</comment>
<keyword id="KW-0903">Direct protein sequencing</keyword>
<evidence type="ECO:0000305" key="1"/>
<organism evidence="1">
    <name type="scientific">Naegleria fowleri</name>
    <name type="common">Brain eating amoeba</name>
    <dbReference type="NCBI Taxonomy" id="5763"/>
    <lineage>
        <taxon>Eukaryota</taxon>
        <taxon>Discoba</taxon>
        <taxon>Heterolobosea</taxon>
        <taxon>Tetramitia</taxon>
        <taxon>Eutetramitia</taxon>
        <taxon>Vahlkampfiidae</taxon>
        <taxon>Naegleria</taxon>
    </lineage>
</organism>
<protein>
    <recommendedName>
        <fullName>Unknown protein NF004 from 2D-PAGE</fullName>
    </recommendedName>
</protein>
<reference evidence="1" key="1">
    <citation type="submission" date="2003-12" db="UniProtKB">
        <title>Comparative study of protein profiles on pathogenic and nonpathogenic Naegleria species by 2D-PAGE.</title>
        <authorList>
            <person name="Omura M."/>
            <person name="Furushima-Shimogawara R."/>
            <person name="Izumiyama S."/>
            <person name="Endo T."/>
        </authorList>
    </citation>
    <scope>PROTEIN SEQUENCE</scope>
    <source>
        <strain>ATCC 30214 / Nf 66</strain>
    </source>
</reference>
<sequence>KTXATLFPGHGIGPEIXQAVXPIL</sequence>
<name>NF04_NAEFO</name>
<accession>P83723</accession>
<feature type="chain" id="PRO_0000055486" description="Unknown protein NF004 from 2D-PAGE">
    <location>
        <begin position="1"/>
        <end position="24" status="greater than"/>
    </location>
</feature>
<feature type="non-terminal residue" evidence="1">
    <location>
        <position position="24"/>
    </location>
</feature>
<proteinExistence type="evidence at protein level"/>